<dbReference type="EMBL" id="AB032371">
    <property type="protein sequence ID" value="BAA97578.1"/>
    <property type="molecule type" value="Genomic_DNA"/>
</dbReference>
<dbReference type="PIR" id="JC7622">
    <property type="entry name" value="JC7622"/>
</dbReference>
<dbReference type="PDB" id="3A07">
    <property type="method" value="X-ray"/>
    <property type="resolution" value="1.19 A"/>
    <property type="chains" value="A/B=43-160"/>
</dbReference>
<dbReference type="PDB" id="4DEN">
    <property type="method" value="X-ray"/>
    <property type="resolution" value="1.60 A"/>
    <property type="chains" value="A=47-160"/>
</dbReference>
<dbReference type="PDB" id="4END">
    <property type="method" value="X-ray"/>
    <property type="resolution" value="1.90 A"/>
    <property type="chains" value="A=47-160"/>
</dbReference>
<dbReference type="PDB" id="4G1R">
    <property type="method" value="X-ray"/>
    <property type="resolution" value="1.57 A"/>
    <property type="chains" value="A/C=47-160"/>
</dbReference>
<dbReference type="PDB" id="4P6A">
    <property type="method" value="X-ray"/>
    <property type="resolution" value="1.40 A"/>
    <property type="chains" value="A=47-160"/>
</dbReference>
<dbReference type="PDBsum" id="3A07"/>
<dbReference type="PDBsum" id="4DEN"/>
<dbReference type="PDBsum" id="4END"/>
<dbReference type="PDBsum" id="4G1R"/>
<dbReference type="PDBsum" id="4P6A"/>
<dbReference type="SMR" id="Q9KWN0"/>
<dbReference type="IntAct" id="Q9KWN0">
    <property type="interactions" value="1"/>
</dbReference>
<dbReference type="MINT" id="Q9KWN0"/>
<dbReference type="CAZy" id="CBM13">
    <property type="family name" value="Carbohydrate-Binding Module Family 13"/>
</dbReference>
<dbReference type="UniLectin" id="Q9KWN0"/>
<dbReference type="EvolutionaryTrace" id="Q9KWN0"/>
<dbReference type="GO" id="GO:0030246">
    <property type="term" value="F:carbohydrate binding"/>
    <property type="evidence" value="ECO:0007669"/>
    <property type="project" value="UniProtKB-KW"/>
</dbReference>
<dbReference type="GO" id="GO:0050688">
    <property type="term" value="P:regulation of defense response to virus"/>
    <property type="evidence" value="ECO:0007669"/>
    <property type="project" value="UniProtKB-KW"/>
</dbReference>
<dbReference type="CDD" id="cd23415">
    <property type="entry name" value="beta-trefoil_Ricin_AH"/>
    <property type="match status" value="1"/>
</dbReference>
<dbReference type="Gene3D" id="2.80.10.50">
    <property type="match status" value="1"/>
</dbReference>
<dbReference type="InterPro" id="IPR035992">
    <property type="entry name" value="Ricin_B-like_lectins"/>
</dbReference>
<dbReference type="InterPro" id="IPR000772">
    <property type="entry name" value="Ricin_B_lectin"/>
</dbReference>
<dbReference type="Pfam" id="PF00652">
    <property type="entry name" value="Ricin_B_lectin"/>
    <property type="match status" value="1"/>
</dbReference>
<dbReference type="SMART" id="SM00458">
    <property type="entry name" value="RICIN"/>
    <property type="match status" value="1"/>
</dbReference>
<dbReference type="SUPFAM" id="SSF50370">
    <property type="entry name" value="Ricin B-like lectins"/>
    <property type="match status" value="1"/>
</dbReference>
<dbReference type="PROSITE" id="PS50231">
    <property type="entry name" value="RICIN_B_LECTIN"/>
    <property type="match status" value="1"/>
</dbReference>
<comment type="subunit">
    <text evidence="5">Interacts with HIV gp120 and SIV gp130.</text>
</comment>
<comment type="interaction">
    <interactant intactId="EBI-8453511">
        <id>Q9KWN0</id>
    </interactant>
    <interactant intactId="EBI-8453491">
        <id>Q75760</id>
        <label>env</label>
    </interactant>
    <organismsDiffer>true</organismsDiffer>
    <experiments>2</experiments>
</comment>
<comment type="mass spectrometry"/>
<comment type="miscellaneous">
    <text>Anti-HIV protein that inhibits virus membrane fusion.</text>
</comment>
<evidence type="ECO:0000255" key="1"/>
<evidence type="ECO:0000255" key="2">
    <source>
        <dbReference type="PROSITE-ProRule" id="PRU00174"/>
    </source>
</evidence>
<evidence type="ECO:0000269" key="3">
    <source>
    </source>
</evidence>
<evidence type="ECO:0000269" key="4">
    <source>
    </source>
</evidence>
<evidence type="ECO:0000269" key="5">
    <source>
    </source>
</evidence>
<evidence type="ECO:0000269" key="6">
    <source>
    </source>
</evidence>
<evidence type="ECO:0000303" key="7">
    <source>
    </source>
</evidence>
<evidence type="ECO:0000305" key="8"/>
<evidence type="ECO:0000312" key="9">
    <source>
        <dbReference type="EMBL" id="BAA97578.1"/>
    </source>
</evidence>
<evidence type="ECO:0007829" key="10">
    <source>
        <dbReference type="PDB" id="3A07"/>
    </source>
</evidence>
<feature type="signal peptide" evidence="1">
    <location>
        <begin position="1"/>
        <end position="26"/>
    </location>
</feature>
<feature type="propeptide" id="PRO_0000020653" evidence="1 3 4">
    <location>
        <begin position="27"/>
        <end position="46"/>
    </location>
</feature>
<feature type="chain" id="PRO_0000020654" description="Actinohivin">
    <location>
        <begin position="47"/>
        <end position="160"/>
    </location>
</feature>
<feature type="domain" description="Ricin B-type lectin" evidence="2">
    <location>
        <begin position="45"/>
        <end position="160"/>
    </location>
</feature>
<feature type="repeat" description="1" evidence="7">
    <location>
        <begin position="47"/>
        <end position="84"/>
    </location>
</feature>
<feature type="repeat" description="2" evidence="7">
    <location>
        <begin position="85"/>
        <end position="122"/>
    </location>
</feature>
<feature type="repeat" description="3" evidence="7">
    <location>
        <begin position="123"/>
        <end position="160"/>
    </location>
</feature>
<feature type="region of interest" description="3 X 38 AA tandem repeats">
    <location>
        <begin position="47"/>
        <end position="160"/>
    </location>
</feature>
<feature type="mutagenesis site" description="Partial loss of HIV fusion inhibition." evidence="6">
    <original>I</original>
    <variation>A</variation>
    <location>
        <position position="51"/>
    </location>
</feature>
<feature type="mutagenesis site" description="Partial loss of HIV fusion inhibition." evidence="6">
    <original>Q</original>
    <variation>A</variation>
    <location>
        <position position="79"/>
    </location>
</feature>
<feature type="mutagenesis site" description="Partial loss of HIV fusion inhibition." evidence="6">
    <original>Q</original>
    <variation>A</variation>
    <location>
        <position position="117"/>
    </location>
</feature>
<feature type="mutagenesis site" description="Complete loss of HIV fusion inhibition." evidence="6">
    <original>Q</original>
    <variation>A</variation>
    <location>
        <position position="155"/>
    </location>
</feature>
<feature type="strand" evidence="10">
    <location>
        <begin position="46"/>
        <end position="49"/>
    </location>
</feature>
<feature type="strand" evidence="10">
    <location>
        <begin position="51"/>
        <end position="53"/>
    </location>
</feature>
<feature type="turn" evidence="10">
    <location>
        <begin position="54"/>
        <end position="56"/>
    </location>
</feature>
<feature type="strand" evidence="10">
    <location>
        <begin position="59"/>
        <end position="62"/>
    </location>
</feature>
<feature type="strand" evidence="10">
    <location>
        <begin position="68"/>
        <end position="71"/>
    </location>
</feature>
<feature type="helix" evidence="10">
    <location>
        <begin position="77"/>
        <end position="79"/>
    </location>
</feature>
<feature type="strand" evidence="10">
    <location>
        <begin position="81"/>
        <end position="83"/>
    </location>
</feature>
<feature type="strand" evidence="10">
    <location>
        <begin position="85"/>
        <end position="87"/>
    </location>
</feature>
<feature type="turn" evidence="10">
    <location>
        <begin position="92"/>
        <end position="94"/>
    </location>
</feature>
<feature type="strand" evidence="10">
    <location>
        <begin position="97"/>
        <end position="100"/>
    </location>
</feature>
<feature type="strand" evidence="10">
    <location>
        <begin position="105"/>
        <end position="109"/>
    </location>
</feature>
<feature type="helix" evidence="10">
    <location>
        <begin position="115"/>
        <end position="117"/>
    </location>
</feature>
<feature type="strand" evidence="10">
    <location>
        <begin position="119"/>
        <end position="121"/>
    </location>
</feature>
<feature type="strand" evidence="10">
    <location>
        <begin position="127"/>
        <end position="129"/>
    </location>
</feature>
<feature type="turn" evidence="10">
    <location>
        <begin position="130"/>
        <end position="132"/>
    </location>
</feature>
<feature type="strand" evidence="10">
    <location>
        <begin position="135"/>
        <end position="138"/>
    </location>
</feature>
<feature type="strand" evidence="10">
    <location>
        <begin position="144"/>
        <end position="147"/>
    </location>
</feature>
<feature type="helix" evidence="10">
    <location>
        <begin position="153"/>
        <end position="155"/>
    </location>
</feature>
<feature type="strand" evidence="10">
    <location>
        <begin position="157"/>
        <end position="159"/>
    </location>
</feature>
<proteinExistence type="evidence at protein level"/>
<sequence>MNTLTKLTIGAVALTGSFLAAAPASAAPAADTTASPALGSQVSAQFASVTIRNAQTGRLLDSNYNGNVYTLPANGGNYQRWTGPGDGTVRNAQTGRCLDSNYDGAVYTLPCNGGSYQKWLFYSNGYIQNVETGRVLDSNYNGNVYTLPANGGNYQKWYTG</sequence>
<keyword id="KW-0002">3D-structure</keyword>
<keyword id="KW-0930">Antiviral protein</keyword>
<keyword id="KW-0903">Direct protein sequencing</keyword>
<keyword id="KW-0430">Lectin</keyword>
<keyword id="KW-0677">Repeat</keyword>
<keyword id="KW-0732">Signal</keyword>
<reference evidence="9" key="1">
    <citation type="journal article" date="2001" name="Biochem. Biophys. Res. Commun.">
        <title>Molecular cloning of actinohivin, a novel anti-HIV protein from an actinomycete, and its expression in Escherichia coli.</title>
        <authorList>
            <person name="Inokoshi J."/>
            <person name="Chiba H."/>
            <person name="Asanuma S."/>
            <person name="Takahashi A."/>
            <person name="Omura S."/>
            <person name="Tanaka H."/>
        </authorList>
    </citation>
    <scope>NUCLEOTIDE SEQUENCE [GENOMIC DNA]</scope>
</reference>
<reference evidence="8" key="2">
    <citation type="journal article" date="2001" name="Biochem. Biophys. Res. Commun.">
        <title>Actinohivin, a novel anti-HIV protein from an actinomycete that inhibits syncytium formation: isolation, characterization, and biological activities.</title>
        <authorList>
            <person name="Chiba H."/>
            <person name="Inokoshi J."/>
            <person name="Okamoto M."/>
            <person name="Asanuma S."/>
            <person name="Matsuzaki K."/>
            <person name="Iwama M."/>
            <person name="Mizumoto K."/>
            <person name="Tanaka H."/>
            <person name="Oheda M."/>
            <person name="Fujita K."/>
            <person name="Nakashima H."/>
            <person name="Shinose M."/>
            <person name="Takahashi Y."/>
            <person name="Omura S."/>
        </authorList>
    </citation>
    <scope>PROTEIN SEQUENCE OF 47-160</scope>
    <scope>FUNCTION</scope>
    <scope>MASS SPECTROMETRY</scope>
</reference>
<reference key="3">
    <citation type="journal article" date="2004" name="Biochem. Biophys. Res. Commun.">
        <title>Actinohivin, a novel anti-human immunodeficiency virus protein from an actinomycete, inhibits viral entry to cells by binding high-mannose type sugar chains of gp120.</title>
        <authorList>
            <person name="Chiba H."/>
            <person name="Inokoshi J."/>
            <person name="Nakashima H."/>
            <person name="Omura S."/>
            <person name="Tanaka H."/>
        </authorList>
    </citation>
    <scope>INTERACTION WITH HIV-1 GP120 AND SIV GP130</scope>
</reference>
<reference key="4">
    <citation type="journal article" date="2005" name="Arch. Biochem. Biophys.">
        <title>Essential regions for antiviral activities of actinohivin, a sugar-binding anti-human immunodeficiency virus protein from an actinomycete.</title>
        <authorList>
            <person name="Takahashi A."/>
            <person name="Inokoshi J."/>
            <person name="Chiba H."/>
            <person name="Omura S."/>
            <person name="Tanaka H."/>
        </authorList>
    </citation>
    <scope>MUTAGENESIS OF ILE-51; GLN-79; GLN-117 AND GLN-155</scope>
</reference>
<organism evidence="8">
    <name type="scientific">Actinomycete sp. (strain K97-0003)</name>
    <dbReference type="NCBI Taxonomy" id="237531"/>
    <lineage>
        <taxon>Bacteria</taxon>
        <taxon>Bacillati</taxon>
        <taxon>Actinomycetota</taxon>
        <taxon>Actinomycetes</taxon>
        <taxon>Actinomycetales</taxon>
    </lineage>
</organism>
<protein>
    <recommendedName>
        <fullName>Actinohivin</fullName>
    </recommendedName>
</protein>
<name>AHV_ACTSK</name>
<accession>Q9KWN0</accession>
<gene>
    <name type="primary">ath</name>
</gene>